<dbReference type="EMBL" id="CH477429">
    <property type="protein sequence ID" value="EAT41098.1"/>
    <property type="molecule type" value="Genomic_DNA"/>
</dbReference>
<dbReference type="SMR" id="Q172Y1"/>
<dbReference type="STRING" id="7159.Q172Y1"/>
<dbReference type="PaxDb" id="7159-AAEL007230-PA"/>
<dbReference type="EnsemblMetazoa" id="AAEL007230-RA">
    <property type="protein sequence ID" value="AAEL007230-PA"/>
    <property type="gene ID" value="AAEL007230"/>
</dbReference>
<dbReference type="GeneID" id="5568934"/>
<dbReference type="KEGG" id="aag:5568934"/>
<dbReference type="CTD" id="90390"/>
<dbReference type="VEuPathDB" id="VectorBase:AAEL007230"/>
<dbReference type="eggNOG" id="ENOG502QV3C">
    <property type="taxonomic scope" value="Eukaryota"/>
</dbReference>
<dbReference type="HOGENOM" id="CLU_074190_0_0_1"/>
<dbReference type="InParanoid" id="Q172Y1"/>
<dbReference type="OMA" id="HRDNNTE"/>
<dbReference type="OrthoDB" id="10067025at2759"/>
<dbReference type="PhylomeDB" id="Q172Y1"/>
<dbReference type="Proteomes" id="UP000008820">
    <property type="component" value="Chromosome 2"/>
</dbReference>
<dbReference type="Proteomes" id="UP000682892">
    <property type="component" value="Chromosome 2"/>
</dbReference>
<dbReference type="GO" id="GO:0016592">
    <property type="term" value="C:mediator complex"/>
    <property type="evidence" value="ECO:0007669"/>
    <property type="project" value="TreeGrafter"/>
</dbReference>
<dbReference type="GO" id="GO:0003712">
    <property type="term" value="F:transcription coregulator activity"/>
    <property type="evidence" value="ECO:0007669"/>
    <property type="project" value="TreeGrafter"/>
</dbReference>
<dbReference type="GO" id="GO:0045893">
    <property type="term" value="P:positive regulation of DNA-templated transcription"/>
    <property type="evidence" value="ECO:0007669"/>
    <property type="project" value="TreeGrafter"/>
</dbReference>
<dbReference type="InterPro" id="IPR021019">
    <property type="entry name" value="Mediator_Med30_met"/>
</dbReference>
<dbReference type="PANTHER" id="PTHR31705">
    <property type="entry name" value="MEDIATOR OF RNA POLYMERASE II TRANSCRIPTION SUBUNIT 30"/>
    <property type="match status" value="1"/>
</dbReference>
<dbReference type="PANTHER" id="PTHR31705:SF4">
    <property type="entry name" value="MEDIATOR OF RNA POLYMERASE II TRANSCRIPTION SUBUNIT 30"/>
    <property type="match status" value="1"/>
</dbReference>
<dbReference type="Pfam" id="PF11315">
    <property type="entry name" value="Med30"/>
    <property type="match status" value="1"/>
</dbReference>
<gene>
    <name type="primary">MED30</name>
    <name type="ORF">AAEL007230</name>
</gene>
<name>MED30_AEDAE</name>
<accession>Q172Y1</accession>
<evidence type="ECO:0000250" key="1"/>
<evidence type="ECO:0000256" key="2">
    <source>
        <dbReference type="SAM" id="MobiDB-lite"/>
    </source>
</evidence>
<evidence type="ECO:0000305" key="3"/>
<organism>
    <name type="scientific">Aedes aegypti</name>
    <name type="common">Yellowfever mosquito</name>
    <name type="synonym">Culex aegypti</name>
    <dbReference type="NCBI Taxonomy" id="7159"/>
    <lineage>
        <taxon>Eukaryota</taxon>
        <taxon>Metazoa</taxon>
        <taxon>Ecdysozoa</taxon>
        <taxon>Arthropoda</taxon>
        <taxon>Hexapoda</taxon>
        <taxon>Insecta</taxon>
        <taxon>Pterygota</taxon>
        <taxon>Neoptera</taxon>
        <taxon>Endopterygota</taxon>
        <taxon>Diptera</taxon>
        <taxon>Nematocera</taxon>
        <taxon>Culicoidea</taxon>
        <taxon>Culicidae</taxon>
        <taxon>Culicinae</taxon>
        <taxon>Aedini</taxon>
        <taxon>Aedes</taxon>
        <taxon>Stegomyia</taxon>
    </lineage>
</organism>
<sequence length="306" mass="33622">MSGQYPSGYQSPSGHRGNFNSPMMQQQLNQMGVPNQMGMMGFNQGNVMQNQQQMQSGGVQSGPDIGMGQNIQQQQQPNPSQGTGQGQQQQPGQGQAQGQQQQNPQQSPQLGMAAGGQAVSSAAQSATGTVGGAPPGQPNAGPVASTQAASNVQQKEFNLLTLCRIGQETVQDIVSRFQEVFGLLRGIQPPNGTNAGLSSSNDKKAKVQEQFRTIRLLFKRLRLLYDKCNDNCQQGMEYTHVESLIPLKGEPERAEPIHTEEYKKALQENRELIEIVMLKNKQLREIIDKIRLTIWEINTMLSMRRC</sequence>
<protein>
    <recommendedName>
        <fullName>Mediator of RNA polymerase II transcription subunit 30</fullName>
    </recommendedName>
    <alternativeName>
        <fullName>Mediator complex subunit 30</fullName>
    </alternativeName>
</protein>
<keyword id="KW-0010">Activator</keyword>
<keyword id="KW-0539">Nucleus</keyword>
<keyword id="KW-1185">Reference proteome</keyword>
<keyword id="KW-0804">Transcription</keyword>
<keyword id="KW-0805">Transcription regulation</keyword>
<reference key="1">
    <citation type="journal article" date="2007" name="Science">
        <title>Genome sequence of Aedes aegypti, a major arbovirus vector.</title>
        <authorList>
            <person name="Nene V."/>
            <person name="Wortman J.R."/>
            <person name="Lawson D."/>
            <person name="Haas B.J."/>
            <person name="Kodira C.D."/>
            <person name="Tu Z.J."/>
            <person name="Loftus B.J."/>
            <person name="Xi Z."/>
            <person name="Megy K."/>
            <person name="Grabherr M."/>
            <person name="Ren Q."/>
            <person name="Zdobnov E.M."/>
            <person name="Lobo N.F."/>
            <person name="Campbell K.S."/>
            <person name="Brown S.E."/>
            <person name="Bonaldo M.F."/>
            <person name="Zhu J."/>
            <person name="Sinkins S.P."/>
            <person name="Hogenkamp D.G."/>
            <person name="Amedeo P."/>
            <person name="Arensburger P."/>
            <person name="Atkinson P.W."/>
            <person name="Bidwell S.L."/>
            <person name="Biedler J."/>
            <person name="Birney E."/>
            <person name="Bruggner R.V."/>
            <person name="Costas J."/>
            <person name="Coy M.R."/>
            <person name="Crabtree J."/>
            <person name="Crawford M."/>
            <person name="DeBruyn B."/>
            <person name="DeCaprio D."/>
            <person name="Eiglmeier K."/>
            <person name="Eisenstadt E."/>
            <person name="El-Dorry H."/>
            <person name="Gelbart W.M."/>
            <person name="Gomes S.L."/>
            <person name="Hammond M."/>
            <person name="Hannick L.I."/>
            <person name="Hogan J.R."/>
            <person name="Holmes M.H."/>
            <person name="Jaffe D."/>
            <person name="Johnston S.J."/>
            <person name="Kennedy R.C."/>
            <person name="Koo H."/>
            <person name="Kravitz S."/>
            <person name="Kriventseva E.V."/>
            <person name="Kulp D."/>
            <person name="Labutti K."/>
            <person name="Lee E."/>
            <person name="Li S."/>
            <person name="Lovin D.D."/>
            <person name="Mao C."/>
            <person name="Mauceli E."/>
            <person name="Menck C.F."/>
            <person name="Miller J.R."/>
            <person name="Montgomery P."/>
            <person name="Mori A."/>
            <person name="Nascimento A.L."/>
            <person name="Naveira H.F."/>
            <person name="Nusbaum C."/>
            <person name="O'Leary S.B."/>
            <person name="Orvis J."/>
            <person name="Pertea M."/>
            <person name="Quesneville H."/>
            <person name="Reidenbach K.R."/>
            <person name="Rogers Y.-H.C."/>
            <person name="Roth C.W."/>
            <person name="Schneider J.R."/>
            <person name="Schatz M."/>
            <person name="Shumway M."/>
            <person name="Stanke M."/>
            <person name="Stinson E.O."/>
            <person name="Tubio J.M.C."/>
            <person name="Vanzee J.P."/>
            <person name="Verjovski-Almeida S."/>
            <person name="Werner D."/>
            <person name="White O.R."/>
            <person name="Wyder S."/>
            <person name="Zeng Q."/>
            <person name="Zhao Q."/>
            <person name="Zhao Y."/>
            <person name="Hill C.A."/>
            <person name="Raikhel A.S."/>
            <person name="Soares M.B."/>
            <person name="Knudson D.L."/>
            <person name="Lee N.H."/>
            <person name="Galagan J."/>
            <person name="Salzberg S.L."/>
            <person name="Paulsen I.T."/>
            <person name="Dimopoulos G."/>
            <person name="Collins F.H."/>
            <person name="Bruce B."/>
            <person name="Fraser-Liggett C.M."/>
            <person name="Severson D.W."/>
        </authorList>
    </citation>
    <scope>NUCLEOTIDE SEQUENCE [LARGE SCALE GENOMIC DNA]</scope>
    <source>
        <strain>LVPib12</strain>
    </source>
</reference>
<feature type="chain" id="PRO_0000305909" description="Mediator of RNA polymerase II transcription subunit 30">
    <location>
        <begin position="1"/>
        <end position="306"/>
    </location>
</feature>
<feature type="region of interest" description="Disordered" evidence="2">
    <location>
        <begin position="1"/>
        <end position="22"/>
    </location>
</feature>
<feature type="region of interest" description="Disordered" evidence="2">
    <location>
        <begin position="51"/>
        <end position="148"/>
    </location>
</feature>
<feature type="compositionally biased region" description="Low complexity" evidence="2">
    <location>
        <begin position="51"/>
        <end position="128"/>
    </location>
</feature>
<comment type="function">
    <text evidence="1">Component of the Mediator complex, a coactivator involved in the regulated transcription of nearly all RNA polymerase II-dependent genes. Mediator functions as a bridge to convey information from gene-specific regulatory proteins to the basal RNA polymerase II transcription machinery. Mediator is recruited to promoters by direct interactions with regulatory proteins and serves as a scaffold for the assembly of a functional preinitiation complex with RNA polymerase II and the general transcription factors (By similarity).</text>
</comment>
<comment type="subunit">
    <text evidence="1">Component of the Mediator complex.</text>
</comment>
<comment type="subcellular location">
    <subcellularLocation>
        <location evidence="3">Nucleus</location>
    </subcellularLocation>
</comment>
<comment type="similarity">
    <text evidence="3">Belongs to the Mediator complex subunit 30 family.</text>
</comment>
<proteinExistence type="inferred from homology"/>